<name>CU79B_LOCMI</name>
<evidence type="ECO:0000269" key="1">
    <source>
    </source>
</evidence>
<comment type="function">
    <text>Component of the cuticle of migratory locust which contains more than 100 different structural proteins.</text>
</comment>
<comment type="domain">
    <text>The tetrapeptide (A-A-P-[AV]) repeats found throughout the protein are also present in many proteins constituting the protective envelope of other species.</text>
</comment>
<comment type="mass spectrometry"/>
<protein>
    <recommendedName>
        <fullName>Cuticle protein 79, isoform B</fullName>
    </recommendedName>
    <alternativeName>
        <fullName>LM-ACP 79B</fullName>
        <shortName>LM-79B</shortName>
    </alternativeName>
</protein>
<keyword id="KW-0193">Cuticle</keyword>
<keyword id="KW-0903">Direct protein sequencing</keyword>
<keyword id="KW-0677">Repeat</keyword>
<proteinExistence type="evidence at protein level"/>
<dbReference type="GO" id="GO:0042302">
    <property type="term" value="F:structural constituent of cuticle"/>
    <property type="evidence" value="ECO:0007669"/>
    <property type="project" value="UniProtKB-KW"/>
</dbReference>
<reference key="1">
    <citation type="journal article" date="1995" name="Insect Biochem. Mol. Biol.">
        <title>Primary structure of proteins from the wing cuticle of the migratory locust, Locusta migratoria.</title>
        <authorList>
            <person name="Krogh T.N."/>
            <person name="Skou L."/>
            <person name="Roepstorff P."/>
            <person name="Andersen S.O."/>
            <person name="Hoejrup P."/>
        </authorList>
    </citation>
    <scope>PROTEIN SEQUENCE</scope>
    <scope>MASS SPECTROMETRY</scope>
    <source>
        <tissue>Wing</tissue>
    </source>
</reference>
<sequence>GFLGGGYGGGLGLGGYGGGYGLGGGLGGGLGAIGLAAAPAVGIAAAPAIGIAAAPATLVRTRVVPGPARLVQPPPVVQKQVIQPPPIVQTRLIEPPAQLVQGPPQVIHEQTPALIKTAVPAPSFGYKSLLH</sequence>
<organism>
    <name type="scientific">Locusta migratoria</name>
    <name type="common">Migratory locust</name>
    <dbReference type="NCBI Taxonomy" id="7004"/>
    <lineage>
        <taxon>Eukaryota</taxon>
        <taxon>Metazoa</taxon>
        <taxon>Ecdysozoa</taxon>
        <taxon>Arthropoda</taxon>
        <taxon>Hexapoda</taxon>
        <taxon>Insecta</taxon>
        <taxon>Pterygota</taxon>
        <taxon>Neoptera</taxon>
        <taxon>Polyneoptera</taxon>
        <taxon>Orthoptera</taxon>
        <taxon>Caelifera</taxon>
        <taxon>Acrididea</taxon>
        <taxon>Acridomorpha</taxon>
        <taxon>Acridoidea</taxon>
        <taxon>Acrididae</taxon>
        <taxon>Oedipodinae</taxon>
        <taxon>Locusta</taxon>
    </lineage>
</organism>
<feature type="chain" id="PRO_0000196115" description="Cuticle protein 79, isoform B">
    <location>
        <begin position="1"/>
        <end position="131"/>
    </location>
</feature>
<feature type="repeat" description="1">
    <location>
        <begin position="37"/>
        <end position="40"/>
    </location>
</feature>
<feature type="repeat" description="2">
    <location>
        <begin position="45"/>
        <end position="48"/>
    </location>
</feature>
<feature type="repeat" description="3">
    <location>
        <begin position="53"/>
        <end position="56"/>
    </location>
</feature>
<accession>P45587</accession>